<accession>A3N3B5</accession>
<reference key="1">
    <citation type="journal article" date="2008" name="J. Bacteriol.">
        <title>The complete genome sequence of Actinobacillus pleuropneumoniae L20 (serotype 5b).</title>
        <authorList>
            <person name="Foote S.J."/>
            <person name="Bosse J.T."/>
            <person name="Bouevitch A.B."/>
            <person name="Langford P.R."/>
            <person name="Young N.M."/>
            <person name="Nash J.H.E."/>
        </authorList>
    </citation>
    <scope>NUCLEOTIDE SEQUENCE [LARGE SCALE GENOMIC DNA]</scope>
    <source>
        <strain>L20</strain>
    </source>
</reference>
<sequence length="77" mass="8527">MSIEERVKKIIVDQLGVKAEDVKPEASFIEDLGADSLDTVELVMALEEEFDIEIPDEEAEKITTVQSAIDYVTKANA</sequence>
<gene>
    <name evidence="1" type="primary">acpP</name>
    <name type="ordered locus">APL_1819</name>
</gene>
<organism>
    <name type="scientific">Actinobacillus pleuropneumoniae serotype 5b (strain L20)</name>
    <dbReference type="NCBI Taxonomy" id="416269"/>
    <lineage>
        <taxon>Bacteria</taxon>
        <taxon>Pseudomonadati</taxon>
        <taxon>Pseudomonadota</taxon>
        <taxon>Gammaproteobacteria</taxon>
        <taxon>Pasteurellales</taxon>
        <taxon>Pasteurellaceae</taxon>
        <taxon>Actinobacillus</taxon>
    </lineage>
</organism>
<protein>
    <recommendedName>
        <fullName evidence="1">Acyl carrier protein</fullName>
        <shortName evidence="1">ACP</shortName>
    </recommendedName>
</protein>
<dbReference type="EMBL" id="CP000569">
    <property type="protein sequence ID" value="ABN74901.1"/>
    <property type="molecule type" value="Genomic_DNA"/>
</dbReference>
<dbReference type="RefSeq" id="WP_005599419.1">
    <property type="nucleotide sequence ID" value="NC_009053.1"/>
</dbReference>
<dbReference type="SMR" id="A3N3B5"/>
<dbReference type="STRING" id="416269.APL_1819"/>
<dbReference type="EnsemblBacteria" id="ABN74901">
    <property type="protein sequence ID" value="ABN74901"/>
    <property type="gene ID" value="APL_1819"/>
</dbReference>
<dbReference type="GeneID" id="92743596"/>
<dbReference type="KEGG" id="apl:APL_1819"/>
<dbReference type="eggNOG" id="COG0236">
    <property type="taxonomic scope" value="Bacteria"/>
</dbReference>
<dbReference type="HOGENOM" id="CLU_108696_5_1_6"/>
<dbReference type="UniPathway" id="UPA00094"/>
<dbReference type="Proteomes" id="UP000001432">
    <property type="component" value="Chromosome"/>
</dbReference>
<dbReference type="GO" id="GO:0005829">
    <property type="term" value="C:cytosol"/>
    <property type="evidence" value="ECO:0007669"/>
    <property type="project" value="TreeGrafter"/>
</dbReference>
<dbReference type="GO" id="GO:0016020">
    <property type="term" value="C:membrane"/>
    <property type="evidence" value="ECO:0007669"/>
    <property type="project" value="GOC"/>
</dbReference>
<dbReference type="GO" id="GO:0000035">
    <property type="term" value="F:acyl binding"/>
    <property type="evidence" value="ECO:0007669"/>
    <property type="project" value="TreeGrafter"/>
</dbReference>
<dbReference type="GO" id="GO:0000036">
    <property type="term" value="F:acyl carrier activity"/>
    <property type="evidence" value="ECO:0007669"/>
    <property type="project" value="UniProtKB-UniRule"/>
</dbReference>
<dbReference type="GO" id="GO:0031177">
    <property type="term" value="F:phosphopantetheine binding"/>
    <property type="evidence" value="ECO:0007669"/>
    <property type="project" value="InterPro"/>
</dbReference>
<dbReference type="GO" id="GO:0009245">
    <property type="term" value="P:lipid A biosynthetic process"/>
    <property type="evidence" value="ECO:0007669"/>
    <property type="project" value="TreeGrafter"/>
</dbReference>
<dbReference type="FunFam" id="1.10.1200.10:FF:000001">
    <property type="entry name" value="Acyl carrier protein"/>
    <property type="match status" value="1"/>
</dbReference>
<dbReference type="Gene3D" id="1.10.1200.10">
    <property type="entry name" value="ACP-like"/>
    <property type="match status" value="1"/>
</dbReference>
<dbReference type="HAMAP" id="MF_01217">
    <property type="entry name" value="Acyl_carrier"/>
    <property type="match status" value="1"/>
</dbReference>
<dbReference type="InterPro" id="IPR003231">
    <property type="entry name" value="ACP"/>
</dbReference>
<dbReference type="InterPro" id="IPR036736">
    <property type="entry name" value="ACP-like_sf"/>
</dbReference>
<dbReference type="InterPro" id="IPR020806">
    <property type="entry name" value="PKS_PP-bd"/>
</dbReference>
<dbReference type="InterPro" id="IPR009081">
    <property type="entry name" value="PP-bd_ACP"/>
</dbReference>
<dbReference type="InterPro" id="IPR006162">
    <property type="entry name" value="Ppantetheine_attach_site"/>
</dbReference>
<dbReference type="NCBIfam" id="TIGR00517">
    <property type="entry name" value="acyl_carrier"/>
    <property type="match status" value="1"/>
</dbReference>
<dbReference type="NCBIfam" id="NF002148">
    <property type="entry name" value="PRK00982.1-2"/>
    <property type="match status" value="1"/>
</dbReference>
<dbReference type="NCBIfam" id="NF002149">
    <property type="entry name" value="PRK00982.1-3"/>
    <property type="match status" value="1"/>
</dbReference>
<dbReference type="NCBIfam" id="NF002150">
    <property type="entry name" value="PRK00982.1-4"/>
    <property type="match status" value="1"/>
</dbReference>
<dbReference type="NCBIfam" id="NF002151">
    <property type="entry name" value="PRK00982.1-5"/>
    <property type="match status" value="1"/>
</dbReference>
<dbReference type="PANTHER" id="PTHR20863">
    <property type="entry name" value="ACYL CARRIER PROTEIN"/>
    <property type="match status" value="1"/>
</dbReference>
<dbReference type="PANTHER" id="PTHR20863:SF76">
    <property type="entry name" value="CARRIER DOMAIN-CONTAINING PROTEIN"/>
    <property type="match status" value="1"/>
</dbReference>
<dbReference type="Pfam" id="PF00550">
    <property type="entry name" value="PP-binding"/>
    <property type="match status" value="1"/>
</dbReference>
<dbReference type="SMART" id="SM00823">
    <property type="entry name" value="PKS_PP"/>
    <property type="match status" value="1"/>
</dbReference>
<dbReference type="SUPFAM" id="SSF47336">
    <property type="entry name" value="ACP-like"/>
    <property type="match status" value="1"/>
</dbReference>
<dbReference type="PROSITE" id="PS50075">
    <property type="entry name" value="CARRIER"/>
    <property type="match status" value="1"/>
</dbReference>
<dbReference type="PROSITE" id="PS00012">
    <property type="entry name" value="PHOSPHOPANTETHEINE"/>
    <property type="match status" value="1"/>
</dbReference>
<evidence type="ECO:0000255" key="1">
    <source>
        <dbReference type="HAMAP-Rule" id="MF_01217"/>
    </source>
</evidence>
<evidence type="ECO:0000255" key="2">
    <source>
        <dbReference type="PROSITE-ProRule" id="PRU00258"/>
    </source>
</evidence>
<proteinExistence type="inferred from homology"/>
<comment type="function">
    <text evidence="1">Carrier of the growing fatty acid chain in fatty acid biosynthesis.</text>
</comment>
<comment type="pathway">
    <text evidence="1">Lipid metabolism; fatty acid biosynthesis.</text>
</comment>
<comment type="subcellular location">
    <subcellularLocation>
        <location evidence="1">Cytoplasm</location>
    </subcellularLocation>
</comment>
<comment type="PTM">
    <text evidence="1">4'-phosphopantetheine is transferred from CoA to a specific serine of apo-ACP by AcpS. This modification is essential for activity because fatty acids are bound in thioester linkage to the sulfhydryl of the prosthetic group.</text>
</comment>
<comment type="similarity">
    <text evidence="1">Belongs to the acyl carrier protein (ACP) family.</text>
</comment>
<feature type="chain" id="PRO_1000066544" description="Acyl carrier protein">
    <location>
        <begin position="1"/>
        <end position="77"/>
    </location>
</feature>
<feature type="domain" description="Carrier" evidence="2">
    <location>
        <begin position="1"/>
        <end position="76"/>
    </location>
</feature>
<feature type="modified residue" description="O-(pantetheine 4'-phosphoryl)serine" evidence="2">
    <location>
        <position position="36"/>
    </location>
</feature>
<keyword id="KW-0963">Cytoplasm</keyword>
<keyword id="KW-0275">Fatty acid biosynthesis</keyword>
<keyword id="KW-0276">Fatty acid metabolism</keyword>
<keyword id="KW-0444">Lipid biosynthesis</keyword>
<keyword id="KW-0443">Lipid metabolism</keyword>
<keyword id="KW-0596">Phosphopantetheine</keyword>
<keyword id="KW-0597">Phosphoprotein</keyword>
<keyword id="KW-1185">Reference proteome</keyword>
<name>ACP_ACTP2</name>